<protein>
    <recommendedName>
        <fullName evidence="1">Autonomous glycyl radical cofactor</fullName>
    </recommendedName>
</protein>
<evidence type="ECO:0000255" key="1">
    <source>
        <dbReference type="HAMAP-Rule" id="MF_00806"/>
    </source>
</evidence>
<dbReference type="EMBL" id="CP000668">
    <property type="protein sequence ID" value="ABP39953.1"/>
    <property type="molecule type" value="Genomic_DNA"/>
</dbReference>
<dbReference type="RefSeq" id="WP_002209664.1">
    <property type="nucleotide sequence ID" value="NZ_CP009715.1"/>
</dbReference>
<dbReference type="SMR" id="A4TKZ1"/>
<dbReference type="GeneID" id="57975986"/>
<dbReference type="KEGG" id="ypp:YPDSF_1566"/>
<dbReference type="PATRIC" id="fig|386656.14.peg.2204"/>
<dbReference type="GO" id="GO:0005829">
    <property type="term" value="C:cytosol"/>
    <property type="evidence" value="ECO:0007669"/>
    <property type="project" value="TreeGrafter"/>
</dbReference>
<dbReference type="GO" id="GO:0008861">
    <property type="term" value="F:formate C-acetyltransferase activity"/>
    <property type="evidence" value="ECO:0007669"/>
    <property type="project" value="TreeGrafter"/>
</dbReference>
<dbReference type="FunFam" id="3.20.70.20:FF:000002">
    <property type="entry name" value="Autonomous glycyl radical cofactor"/>
    <property type="match status" value="1"/>
</dbReference>
<dbReference type="Gene3D" id="3.20.70.20">
    <property type="match status" value="1"/>
</dbReference>
<dbReference type="HAMAP" id="MF_00806">
    <property type="entry name" value="GrcA"/>
    <property type="match status" value="1"/>
</dbReference>
<dbReference type="InterPro" id="IPR050244">
    <property type="entry name" value="Auton_GlycylRad_Cofactor"/>
</dbReference>
<dbReference type="InterPro" id="IPR019777">
    <property type="entry name" value="Form_AcTrfase_GR_CS"/>
</dbReference>
<dbReference type="InterPro" id="IPR001150">
    <property type="entry name" value="Gly_radical"/>
</dbReference>
<dbReference type="InterPro" id="IPR011140">
    <property type="entry name" value="Glycyl_radical_cofactor_GrcA"/>
</dbReference>
<dbReference type="NCBIfam" id="TIGR04365">
    <property type="entry name" value="spare_glycyl"/>
    <property type="match status" value="1"/>
</dbReference>
<dbReference type="PANTHER" id="PTHR30191">
    <property type="entry name" value="FORMATE ACETYLTRANSFERASE"/>
    <property type="match status" value="1"/>
</dbReference>
<dbReference type="PANTHER" id="PTHR30191:SF0">
    <property type="entry name" value="FORMATE ACETYLTRANSFERASE 1"/>
    <property type="match status" value="1"/>
</dbReference>
<dbReference type="Pfam" id="PF01228">
    <property type="entry name" value="Gly_radical"/>
    <property type="match status" value="1"/>
</dbReference>
<dbReference type="PIRSF" id="PIRSF000378">
    <property type="entry name" value="Gly_radicl_yfiD"/>
    <property type="match status" value="1"/>
</dbReference>
<dbReference type="SUPFAM" id="SSF51998">
    <property type="entry name" value="PFL-like glycyl radical enzymes"/>
    <property type="match status" value="1"/>
</dbReference>
<dbReference type="PROSITE" id="PS00850">
    <property type="entry name" value="GLY_RADICAL_1"/>
    <property type="match status" value="1"/>
</dbReference>
<dbReference type="PROSITE" id="PS51149">
    <property type="entry name" value="GLY_RADICAL_2"/>
    <property type="match status" value="1"/>
</dbReference>
<keyword id="KW-0556">Organic radical</keyword>
<proteinExistence type="inferred from homology"/>
<comment type="function">
    <text evidence="1">Acts as a radical domain for damaged PFL and possibly other radical proteins.</text>
</comment>
<gene>
    <name evidence="1" type="primary">grcA</name>
    <name type="ordered locus">YPDSF_1566</name>
</gene>
<organism>
    <name type="scientific">Yersinia pestis (strain Pestoides F)</name>
    <dbReference type="NCBI Taxonomy" id="386656"/>
    <lineage>
        <taxon>Bacteria</taxon>
        <taxon>Pseudomonadati</taxon>
        <taxon>Pseudomonadota</taxon>
        <taxon>Gammaproteobacteria</taxon>
        <taxon>Enterobacterales</taxon>
        <taxon>Yersiniaceae</taxon>
        <taxon>Yersinia</taxon>
    </lineage>
</organism>
<accession>A4TKZ1</accession>
<feature type="chain" id="PRO_1000083744" description="Autonomous glycyl radical cofactor">
    <location>
        <begin position="1"/>
        <end position="127"/>
    </location>
</feature>
<feature type="domain" description="Glycine radical" evidence="1">
    <location>
        <begin position="5"/>
        <end position="127"/>
    </location>
</feature>
<feature type="modified residue" description="Glycine radical" evidence="1">
    <location>
        <position position="102"/>
    </location>
</feature>
<sequence>MITGIQITKANNEALLNSFWLLDDEKAELRCVCAKSGYAEDQIVPTSELGEIEYREVPLEVQPTVRVEGGQHLNVNVLSRDTLEDAVKNPEKYPQLTIRVSGYAVRFNSLTPEQQRDVITRTFTESL</sequence>
<name>GRCA_YERPP</name>
<reference key="1">
    <citation type="submission" date="2007-02" db="EMBL/GenBank/DDBJ databases">
        <title>Complete sequence of chromosome of Yersinia pestis Pestoides F.</title>
        <authorList>
            <consortium name="US DOE Joint Genome Institute"/>
            <person name="Copeland A."/>
            <person name="Lucas S."/>
            <person name="Lapidus A."/>
            <person name="Barry K."/>
            <person name="Detter J.C."/>
            <person name="Glavina del Rio T."/>
            <person name="Hammon N."/>
            <person name="Israni S."/>
            <person name="Dalin E."/>
            <person name="Tice H."/>
            <person name="Pitluck S."/>
            <person name="Di Bartolo G."/>
            <person name="Chain P."/>
            <person name="Malfatti S."/>
            <person name="Shin M."/>
            <person name="Vergez L."/>
            <person name="Schmutz J."/>
            <person name="Larimer F."/>
            <person name="Land M."/>
            <person name="Hauser L."/>
            <person name="Worsham P."/>
            <person name="Chu M."/>
            <person name="Bearden S."/>
            <person name="Garcia E."/>
            <person name="Richardson P."/>
        </authorList>
    </citation>
    <scope>NUCLEOTIDE SEQUENCE [LARGE SCALE GENOMIC DNA]</scope>
    <source>
        <strain>Pestoides F</strain>
    </source>
</reference>